<protein>
    <recommendedName>
        <fullName evidence="1">Catalase-peroxidase</fullName>
        <shortName evidence="1">CP</shortName>
        <ecNumber evidence="1">1.11.1.21</ecNumber>
    </recommendedName>
    <alternativeName>
        <fullName evidence="1">Peroxidase/catalase</fullName>
    </alternativeName>
</protein>
<sequence>MSNEAKCPFHQAAGNGTSNRDWWPNQLDLSILHRHSSLSDPMGKDFNYAQAFEKLDLAAVKRDLHALMTTSQDWWPADFGHYGGLFIRMAWHSAGTYRTADGRGGAGEGQQRFAPLNSWPDNANLDKARRLLWPIKQKYGRAISWADLLILTGNVALESMGFKTFGFAGGRADTWEPEDVYWGSEKIWLELSGGPNSRYSGDRQLENPLAAVQMGLIYVNPEGPDGNPDPVAAARDIRDTFARMAMNDEETVALIAGGHTFGKTHGAGPASNVGAEPEAAGIEAQGLGWKSAYRTGKGADAITSGLEVTWTTTPTQWSHNFFENLFGYEWELTKSPAGAHQWVAKGADAVIPDAFDPSKKHRPTMLTTDLSLRFDPAYEKISRRFHENPEQFADAFARAWFKLTHRDMGPRARYLGPEVPAEVLLWQDPIPAVDHPLIDAADAAELKAKVLASGLTVSQLVSTAWAAASTFRGSDKRGGANGARIRLAPQKDWEANQPEQLAAVLETLEAIRTAFNGAQRGGKQVSLADLIVLAGCAGVEQAAKNAGHAVTVPFAPGRADASQEQTDVESMAVLEPVADGFRNYLKGKYRVPAEVLLVDKAQLLTLSAPEMTVLLGGLRVLGANVGQSRHGVFTAREQALTNDFFVNLLDMGTEWKPTAADADVFEGRDRATGALKWTGTRVDLVFGSHSQLRALAEVYGSADAQEKFVRDFVAVWNKVMNLDRFDLA</sequence>
<feature type="chain" id="PRO_0000354743" description="Catalase-peroxidase">
    <location>
        <begin position="1"/>
        <end position="728"/>
    </location>
</feature>
<feature type="active site" description="Proton acceptor" evidence="1">
    <location>
        <position position="92"/>
    </location>
</feature>
<feature type="binding site" description="axial binding residue" evidence="1">
    <location>
        <position position="259"/>
    </location>
    <ligand>
        <name>heme b</name>
        <dbReference type="ChEBI" id="CHEBI:60344"/>
    </ligand>
    <ligandPart>
        <name>Fe</name>
        <dbReference type="ChEBI" id="CHEBI:18248"/>
    </ligandPart>
</feature>
<feature type="site" description="Transition state stabilizer" evidence="1">
    <location>
        <position position="88"/>
    </location>
</feature>
<feature type="cross-link" description="Tryptophyl-tyrosyl-methioninium (Trp-Tyr) (with M-244)" evidence="1">
    <location>
        <begin position="91"/>
        <end position="218"/>
    </location>
</feature>
<feature type="cross-link" description="Tryptophyl-tyrosyl-methioninium (Tyr-Met) (with W-91)" evidence="1">
    <location>
        <begin position="218"/>
        <end position="244"/>
    </location>
</feature>
<evidence type="ECO:0000255" key="1">
    <source>
        <dbReference type="HAMAP-Rule" id="MF_01961"/>
    </source>
</evidence>
<organism>
    <name type="scientific">Burkholderia mallei (strain NCTC 10247)</name>
    <dbReference type="NCBI Taxonomy" id="320389"/>
    <lineage>
        <taxon>Bacteria</taxon>
        <taxon>Pseudomonadati</taxon>
        <taxon>Pseudomonadota</taxon>
        <taxon>Betaproteobacteria</taxon>
        <taxon>Burkholderiales</taxon>
        <taxon>Burkholderiaceae</taxon>
        <taxon>Burkholderia</taxon>
        <taxon>pseudomallei group</taxon>
    </lineage>
</organism>
<proteinExistence type="inferred from homology"/>
<gene>
    <name evidence="1" type="primary">katG</name>
    <name type="ordered locus">BMA10247_2578</name>
</gene>
<name>KATG_BURM7</name>
<comment type="function">
    <text evidence="1">Bifunctional enzyme with both catalase and broad-spectrum peroxidase activity.</text>
</comment>
<comment type="catalytic activity">
    <reaction evidence="1">
        <text>H2O2 + AH2 = A + 2 H2O</text>
        <dbReference type="Rhea" id="RHEA:30275"/>
        <dbReference type="ChEBI" id="CHEBI:13193"/>
        <dbReference type="ChEBI" id="CHEBI:15377"/>
        <dbReference type="ChEBI" id="CHEBI:16240"/>
        <dbReference type="ChEBI" id="CHEBI:17499"/>
        <dbReference type="EC" id="1.11.1.21"/>
    </reaction>
</comment>
<comment type="catalytic activity">
    <reaction evidence="1">
        <text>2 H2O2 = O2 + 2 H2O</text>
        <dbReference type="Rhea" id="RHEA:20309"/>
        <dbReference type="ChEBI" id="CHEBI:15377"/>
        <dbReference type="ChEBI" id="CHEBI:15379"/>
        <dbReference type="ChEBI" id="CHEBI:16240"/>
        <dbReference type="EC" id="1.11.1.21"/>
    </reaction>
</comment>
<comment type="cofactor">
    <cofactor evidence="1">
        <name>heme b</name>
        <dbReference type="ChEBI" id="CHEBI:60344"/>
    </cofactor>
    <text evidence="1">Binds 1 heme b (iron(II)-protoporphyrin IX) group per dimer.</text>
</comment>
<comment type="subunit">
    <text evidence="1">Homodimer or homotetramer.</text>
</comment>
<comment type="PTM">
    <text evidence="1">Formation of the three residue Trp-Tyr-Met cross-link is important for the catalase, but not the peroxidase activity of the enzyme.</text>
</comment>
<comment type="similarity">
    <text evidence="1">Belongs to the peroxidase family. Peroxidase/catalase subfamily.</text>
</comment>
<keyword id="KW-0349">Heme</keyword>
<keyword id="KW-0376">Hydrogen peroxide</keyword>
<keyword id="KW-0408">Iron</keyword>
<keyword id="KW-0479">Metal-binding</keyword>
<keyword id="KW-0560">Oxidoreductase</keyword>
<keyword id="KW-0575">Peroxidase</keyword>
<reference key="1">
    <citation type="journal article" date="2010" name="Genome Biol. Evol.">
        <title>Continuing evolution of Burkholderia mallei through genome reduction and large-scale rearrangements.</title>
        <authorList>
            <person name="Losada L."/>
            <person name="Ronning C.M."/>
            <person name="DeShazer D."/>
            <person name="Woods D."/>
            <person name="Fedorova N."/>
            <person name="Kim H.S."/>
            <person name="Shabalina S.A."/>
            <person name="Pearson T.R."/>
            <person name="Brinkac L."/>
            <person name="Tan P."/>
            <person name="Nandi T."/>
            <person name="Crabtree J."/>
            <person name="Badger J."/>
            <person name="Beckstrom-Sternberg S."/>
            <person name="Saqib M."/>
            <person name="Schutzer S.E."/>
            <person name="Keim P."/>
            <person name="Nierman W.C."/>
        </authorList>
    </citation>
    <scope>NUCLEOTIDE SEQUENCE [LARGE SCALE GENOMIC DNA]</scope>
    <source>
        <strain>NCTC 10247</strain>
    </source>
</reference>
<accession>A3MPB8</accession>
<dbReference type="EC" id="1.11.1.21" evidence="1"/>
<dbReference type="EMBL" id="CP000548">
    <property type="protein sequence ID" value="ABO05773.1"/>
    <property type="molecule type" value="Genomic_DNA"/>
</dbReference>
<dbReference type="RefSeq" id="WP_004194237.1">
    <property type="nucleotide sequence ID" value="NZ_CP007802.1"/>
</dbReference>
<dbReference type="SMR" id="A3MPB8"/>
<dbReference type="GeneID" id="93061455"/>
<dbReference type="KEGG" id="bmaz:BM44_736"/>
<dbReference type="KEGG" id="bmn:BMA10247_2578"/>
<dbReference type="PATRIC" id="fig|320389.8.peg.812"/>
<dbReference type="GO" id="GO:0005829">
    <property type="term" value="C:cytosol"/>
    <property type="evidence" value="ECO:0007669"/>
    <property type="project" value="TreeGrafter"/>
</dbReference>
<dbReference type="GO" id="GO:0004096">
    <property type="term" value="F:catalase activity"/>
    <property type="evidence" value="ECO:0007669"/>
    <property type="project" value="UniProtKB-UniRule"/>
</dbReference>
<dbReference type="GO" id="GO:0020037">
    <property type="term" value="F:heme binding"/>
    <property type="evidence" value="ECO:0007669"/>
    <property type="project" value="InterPro"/>
</dbReference>
<dbReference type="GO" id="GO:0046872">
    <property type="term" value="F:metal ion binding"/>
    <property type="evidence" value="ECO:0007669"/>
    <property type="project" value="UniProtKB-KW"/>
</dbReference>
<dbReference type="GO" id="GO:0070301">
    <property type="term" value="P:cellular response to hydrogen peroxide"/>
    <property type="evidence" value="ECO:0007669"/>
    <property type="project" value="TreeGrafter"/>
</dbReference>
<dbReference type="GO" id="GO:0042744">
    <property type="term" value="P:hydrogen peroxide catabolic process"/>
    <property type="evidence" value="ECO:0007669"/>
    <property type="project" value="UniProtKB-KW"/>
</dbReference>
<dbReference type="CDD" id="cd00649">
    <property type="entry name" value="catalase_peroxidase_1"/>
    <property type="match status" value="1"/>
</dbReference>
<dbReference type="CDD" id="cd08200">
    <property type="entry name" value="catalase_peroxidase_2"/>
    <property type="match status" value="1"/>
</dbReference>
<dbReference type="FunFam" id="1.10.420.10:FF:000002">
    <property type="entry name" value="Catalase-peroxidase"/>
    <property type="match status" value="1"/>
</dbReference>
<dbReference type="FunFam" id="1.10.420.10:FF:000004">
    <property type="entry name" value="Catalase-peroxidase"/>
    <property type="match status" value="1"/>
</dbReference>
<dbReference type="FunFam" id="1.10.520.10:FF:000002">
    <property type="entry name" value="Catalase-peroxidase"/>
    <property type="match status" value="1"/>
</dbReference>
<dbReference type="FunFam" id="1.10.520.10:FF:000004">
    <property type="entry name" value="Catalase-peroxidase"/>
    <property type="match status" value="1"/>
</dbReference>
<dbReference type="Gene3D" id="1.10.520.10">
    <property type="match status" value="2"/>
</dbReference>
<dbReference type="Gene3D" id="1.10.420.10">
    <property type="entry name" value="Peroxidase, domain 2"/>
    <property type="match status" value="2"/>
</dbReference>
<dbReference type="HAMAP" id="MF_01961">
    <property type="entry name" value="Catal_peroxid"/>
    <property type="match status" value="1"/>
</dbReference>
<dbReference type="InterPro" id="IPR000763">
    <property type="entry name" value="Catalase_peroxidase"/>
</dbReference>
<dbReference type="InterPro" id="IPR002016">
    <property type="entry name" value="Haem_peroxidase"/>
</dbReference>
<dbReference type="InterPro" id="IPR010255">
    <property type="entry name" value="Haem_peroxidase_sf"/>
</dbReference>
<dbReference type="InterPro" id="IPR019794">
    <property type="entry name" value="Peroxidases_AS"/>
</dbReference>
<dbReference type="InterPro" id="IPR019793">
    <property type="entry name" value="Peroxidases_heam-ligand_BS"/>
</dbReference>
<dbReference type="NCBIfam" id="TIGR00198">
    <property type="entry name" value="cat_per_HPI"/>
    <property type="match status" value="1"/>
</dbReference>
<dbReference type="NCBIfam" id="NF011635">
    <property type="entry name" value="PRK15061.1"/>
    <property type="match status" value="1"/>
</dbReference>
<dbReference type="PANTHER" id="PTHR30555:SF0">
    <property type="entry name" value="CATALASE-PEROXIDASE"/>
    <property type="match status" value="1"/>
</dbReference>
<dbReference type="PANTHER" id="PTHR30555">
    <property type="entry name" value="HYDROPEROXIDASE I, BIFUNCTIONAL CATALASE-PEROXIDASE"/>
    <property type="match status" value="1"/>
</dbReference>
<dbReference type="Pfam" id="PF00141">
    <property type="entry name" value="peroxidase"/>
    <property type="match status" value="2"/>
</dbReference>
<dbReference type="PRINTS" id="PR00460">
    <property type="entry name" value="BPEROXIDASE"/>
</dbReference>
<dbReference type="PRINTS" id="PR00458">
    <property type="entry name" value="PEROXIDASE"/>
</dbReference>
<dbReference type="SUPFAM" id="SSF48113">
    <property type="entry name" value="Heme-dependent peroxidases"/>
    <property type="match status" value="2"/>
</dbReference>
<dbReference type="PROSITE" id="PS00435">
    <property type="entry name" value="PEROXIDASE_1"/>
    <property type="match status" value="1"/>
</dbReference>
<dbReference type="PROSITE" id="PS00436">
    <property type="entry name" value="PEROXIDASE_2"/>
    <property type="match status" value="1"/>
</dbReference>
<dbReference type="PROSITE" id="PS50873">
    <property type="entry name" value="PEROXIDASE_4"/>
    <property type="match status" value="1"/>
</dbReference>